<name>YD218_YEAST</name>
<proteinExistence type="evidence at protein level"/>
<protein>
    <recommendedName>
        <fullName>Uncharacterized membrane protein YDL218W</fullName>
    </recommendedName>
</protein>
<reference key="1">
    <citation type="journal article" date="1997" name="Nature">
        <title>The nucleotide sequence of Saccharomyces cerevisiae chromosome IV.</title>
        <authorList>
            <person name="Jacq C."/>
            <person name="Alt-Moerbe J."/>
            <person name="Andre B."/>
            <person name="Arnold W."/>
            <person name="Bahr A."/>
            <person name="Ballesta J.P.G."/>
            <person name="Bargues M."/>
            <person name="Baron L."/>
            <person name="Becker A."/>
            <person name="Biteau N."/>
            <person name="Bloecker H."/>
            <person name="Blugeon C."/>
            <person name="Boskovic J."/>
            <person name="Brandt P."/>
            <person name="Brueckner M."/>
            <person name="Buitrago M.J."/>
            <person name="Coster F."/>
            <person name="Delaveau T."/>
            <person name="del Rey F."/>
            <person name="Dujon B."/>
            <person name="Eide L.G."/>
            <person name="Garcia-Cantalejo J.M."/>
            <person name="Goffeau A."/>
            <person name="Gomez-Peris A."/>
            <person name="Granotier C."/>
            <person name="Hanemann V."/>
            <person name="Hankeln T."/>
            <person name="Hoheisel J.D."/>
            <person name="Jaeger W."/>
            <person name="Jimenez A."/>
            <person name="Jonniaux J.-L."/>
            <person name="Kraemer C."/>
            <person name="Kuester H."/>
            <person name="Laamanen P."/>
            <person name="Legros Y."/>
            <person name="Louis E.J."/>
            <person name="Moeller-Rieker S."/>
            <person name="Monnet A."/>
            <person name="Moro M."/>
            <person name="Mueller-Auer S."/>
            <person name="Nussbaumer B."/>
            <person name="Paricio N."/>
            <person name="Paulin L."/>
            <person name="Perea J."/>
            <person name="Perez-Alonso M."/>
            <person name="Perez-Ortin J.E."/>
            <person name="Pohl T.M."/>
            <person name="Prydz H."/>
            <person name="Purnelle B."/>
            <person name="Rasmussen S.W."/>
            <person name="Remacha M.A."/>
            <person name="Revuelta J.L."/>
            <person name="Rieger M."/>
            <person name="Salom D."/>
            <person name="Saluz H.P."/>
            <person name="Saiz J.E."/>
            <person name="Saren A.-M."/>
            <person name="Schaefer M."/>
            <person name="Scharfe M."/>
            <person name="Schmidt E.R."/>
            <person name="Schneider C."/>
            <person name="Scholler P."/>
            <person name="Schwarz S."/>
            <person name="Soler-Mira A."/>
            <person name="Urrestarazu L.A."/>
            <person name="Verhasselt P."/>
            <person name="Vissers S."/>
            <person name="Voet M."/>
            <person name="Volckaert G."/>
            <person name="Wagner G."/>
            <person name="Wambutt R."/>
            <person name="Wedler E."/>
            <person name="Wedler H."/>
            <person name="Woelfl S."/>
            <person name="Harris D.E."/>
            <person name="Bowman S."/>
            <person name="Brown D."/>
            <person name="Churcher C.M."/>
            <person name="Connor R."/>
            <person name="Dedman K."/>
            <person name="Gentles S."/>
            <person name="Hamlin N."/>
            <person name="Hunt S."/>
            <person name="Jones L."/>
            <person name="McDonald S."/>
            <person name="Murphy L.D."/>
            <person name="Niblett D."/>
            <person name="Odell C."/>
            <person name="Oliver K."/>
            <person name="Rajandream M.A."/>
            <person name="Richards C."/>
            <person name="Shore L."/>
            <person name="Walsh S.V."/>
            <person name="Barrell B.G."/>
            <person name="Dietrich F.S."/>
            <person name="Mulligan J.T."/>
            <person name="Allen E."/>
            <person name="Araujo R."/>
            <person name="Aviles E."/>
            <person name="Berno A."/>
            <person name="Carpenter J."/>
            <person name="Chen E."/>
            <person name="Cherry J.M."/>
            <person name="Chung E."/>
            <person name="Duncan M."/>
            <person name="Hunicke-Smith S."/>
            <person name="Hyman R.W."/>
            <person name="Komp C."/>
            <person name="Lashkari D."/>
            <person name="Lew H."/>
            <person name="Lin D."/>
            <person name="Mosedale D."/>
            <person name="Nakahara K."/>
            <person name="Namath A."/>
            <person name="Oefner P."/>
            <person name="Oh C."/>
            <person name="Petel F.X."/>
            <person name="Roberts D."/>
            <person name="Schramm S."/>
            <person name="Schroeder M."/>
            <person name="Shogren T."/>
            <person name="Shroff N."/>
            <person name="Winant A."/>
            <person name="Yelton M.A."/>
            <person name="Botstein D."/>
            <person name="Davis R.W."/>
            <person name="Johnston M."/>
            <person name="Andrews S."/>
            <person name="Brinkman R."/>
            <person name="Cooper J."/>
            <person name="Ding H."/>
            <person name="Du Z."/>
            <person name="Favello A."/>
            <person name="Fulton L."/>
            <person name="Gattung S."/>
            <person name="Greco T."/>
            <person name="Hallsworth K."/>
            <person name="Hawkins J."/>
            <person name="Hillier L.W."/>
            <person name="Jier M."/>
            <person name="Johnson D."/>
            <person name="Johnston L."/>
            <person name="Kirsten J."/>
            <person name="Kucaba T."/>
            <person name="Langston Y."/>
            <person name="Latreille P."/>
            <person name="Le T."/>
            <person name="Mardis E."/>
            <person name="Menezes S."/>
            <person name="Miller N."/>
            <person name="Nhan M."/>
            <person name="Pauley A."/>
            <person name="Peluso D."/>
            <person name="Rifkin L."/>
            <person name="Riles L."/>
            <person name="Taich A."/>
            <person name="Trevaskis E."/>
            <person name="Vignati D."/>
            <person name="Wilcox L."/>
            <person name="Wohldman P."/>
            <person name="Vaudin M."/>
            <person name="Wilson R."/>
            <person name="Waterston R."/>
            <person name="Albermann K."/>
            <person name="Hani J."/>
            <person name="Heumann K."/>
            <person name="Kleine K."/>
            <person name="Mewes H.-W."/>
            <person name="Zollner A."/>
            <person name="Zaccaria P."/>
        </authorList>
    </citation>
    <scope>NUCLEOTIDE SEQUENCE [LARGE SCALE GENOMIC DNA]</scope>
    <source>
        <strain>ATCC 204508 / S288c</strain>
    </source>
</reference>
<reference key="2">
    <citation type="journal article" date="2014" name="G3 (Bethesda)">
        <title>The reference genome sequence of Saccharomyces cerevisiae: Then and now.</title>
        <authorList>
            <person name="Engel S.R."/>
            <person name="Dietrich F.S."/>
            <person name="Fisk D.G."/>
            <person name="Binkley G."/>
            <person name="Balakrishnan R."/>
            <person name="Costanzo M.C."/>
            <person name="Dwight S.S."/>
            <person name="Hitz B.C."/>
            <person name="Karra K."/>
            <person name="Nash R.S."/>
            <person name="Weng S."/>
            <person name="Wong E.D."/>
            <person name="Lloyd P."/>
            <person name="Skrzypek M.S."/>
            <person name="Miyasato S.R."/>
            <person name="Simison M."/>
            <person name="Cherry J.M."/>
        </authorList>
    </citation>
    <scope>GENOME REANNOTATION</scope>
    <source>
        <strain>ATCC 204508 / S288c</strain>
    </source>
</reference>
<reference key="3">
    <citation type="journal article" date="1999" name="J. Bacteriol.">
        <title>Genome-wide transcriptional analysis of aerobic and anaerobic chemostat cultures of Saccharomyces cerevisiae.</title>
        <authorList>
            <person name="ter Linde J.J.M."/>
            <person name="Liang H."/>
            <person name="Davis R.W."/>
            <person name="Steensma H.Y."/>
            <person name="van Dijken J.P."/>
            <person name="Pronk J.T."/>
        </authorList>
    </citation>
    <scope>INDUCTION</scope>
</reference>
<reference key="4">
    <citation type="journal article" date="2006" name="Proc. Natl. Acad. Sci. U.S.A.">
        <title>A global topology map of the Saccharomyces cerevisiae membrane proteome.</title>
        <authorList>
            <person name="Kim H."/>
            <person name="Melen K."/>
            <person name="Oesterberg M."/>
            <person name="von Heijne G."/>
        </authorList>
    </citation>
    <scope>TOPOLOGY [LARGE SCALE ANALYSIS]</scope>
    <source>
        <strain>ATCC 208353 / W303-1A</strain>
    </source>
</reference>
<evidence type="ECO:0000255" key="1"/>
<evidence type="ECO:0000256" key="2">
    <source>
        <dbReference type="SAM" id="MobiDB-lite"/>
    </source>
</evidence>
<evidence type="ECO:0000269" key="3">
    <source>
    </source>
</evidence>
<gene>
    <name type="ordered locus">YDL218W</name>
</gene>
<accession>Q07629</accession>
<accession>D6VRD6</accession>
<accession>P89898</accession>
<accession>Q7LGR3</accession>
<sequence>MKRVTGVFLTLLRFSQFASSVLVMSLLAYAIHAYGNRGNKKTNFTLATGVISVFYLIALGILCLALPTLIYIGMYFCAELIVCMLWLAAFVVLAKAQGERSCSNTNADGLYYNPYSGQYTADSHRRACNSSQAAIAFSGLCFVLFLISVILLGINVLTPIRKRYQTQGMWRSGASMGTKLHRWSGLALSEPFEETAAYDNTNVRTGDVEAGAGDNAAYTSEPNGDARYATNDPNGQYHTTTTNTRYTTTTADPKTRYTTNDRNPGSANVANSAVDQHAYSTDESGDRSYQEKVTEGAHSGAMSGSTAEPNRNVNQMP</sequence>
<feature type="chain" id="PRO_0000242482" description="Uncharacterized membrane protein YDL218W">
    <location>
        <begin position="1"/>
        <end position="317"/>
    </location>
</feature>
<feature type="topological domain" description="Cytoplasmic" evidence="1">
    <location>
        <begin position="1"/>
        <end position="13"/>
    </location>
</feature>
<feature type="transmembrane region" description="Helical" evidence="1">
    <location>
        <begin position="14"/>
        <end position="34"/>
    </location>
</feature>
<feature type="topological domain" description="Extracellular" evidence="1">
    <location>
        <begin position="35"/>
        <end position="49"/>
    </location>
</feature>
<feature type="transmembrane region" description="Helical" evidence="1">
    <location>
        <begin position="50"/>
        <end position="70"/>
    </location>
</feature>
<feature type="topological domain" description="Cytoplasmic" evidence="1">
    <location>
        <position position="71"/>
    </location>
</feature>
<feature type="transmembrane region" description="Helical" evidence="1">
    <location>
        <begin position="72"/>
        <end position="92"/>
    </location>
</feature>
<feature type="topological domain" description="Extracellular" evidence="1">
    <location>
        <begin position="93"/>
        <end position="133"/>
    </location>
</feature>
<feature type="transmembrane region" description="Helical" evidence="1">
    <location>
        <begin position="134"/>
        <end position="154"/>
    </location>
</feature>
<feature type="topological domain" description="Cytoplasmic" evidence="1">
    <location>
        <begin position="155"/>
        <end position="317"/>
    </location>
</feature>
<feature type="region of interest" description="Disordered" evidence="2">
    <location>
        <begin position="204"/>
        <end position="317"/>
    </location>
</feature>
<feature type="compositionally biased region" description="Low complexity" evidence="2">
    <location>
        <begin position="239"/>
        <end position="250"/>
    </location>
</feature>
<feature type="compositionally biased region" description="Polar residues" evidence="2">
    <location>
        <begin position="256"/>
        <end position="282"/>
    </location>
</feature>
<feature type="compositionally biased region" description="Basic and acidic residues" evidence="2">
    <location>
        <begin position="284"/>
        <end position="295"/>
    </location>
</feature>
<feature type="compositionally biased region" description="Polar residues" evidence="2">
    <location>
        <begin position="302"/>
        <end position="317"/>
    </location>
</feature>
<feature type="glycosylation site" description="N-linked (GlcNAc...) asparagine" evidence="1">
    <location>
        <position position="43"/>
    </location>
</feature>
<feature type="glycosylation site" description="N-linked (GlcNAc...) asparagine" evidence="1">
    <location>
        <position position="129"/>
    </location>
</feature>
<dbReference type="EMBL" id="Z74265">
    <property type="protein sequence ID" value="CAA98796.1"/>
    <property type="molecule type" value="Genomic_DNA"/>
</dbReference>
<dbReference type="EMBL" id="Z74266">
    <property type="protein sequence ID" value="CAA98797.1"/>
    <property type="molecule type" value="Genomic_DNA"/>
</dbReference>
<dbReference type="EMBL" id="BK006938">
    <property type="protein sequence ID" value="DAA11646.1"/>
    <property type="molecule type" value="Genomic_DNA"/>
</dbReference>
<dbReference type="PIR" id="S67781">
    <property type="entry name" value="S67781"/>
</dbReference>
<dbReference type="RefSeq" id="NP_010063.1">
    <property type="nucleotide sequence ID" value="NM_001180278.1"/>
</dbReference>
<dbReference type="BioGRID" id="31827">
    <property type="interactions" value="96"/>
</dbReference>
<dbReference type="DIP" id="DIP-5453N"/>
<dbReference type="FunCoup" id="Q07629">
    <property type="interactions" value="41"/>
</dbReference>
<dbReference type="IntAct" id="Q07629">
    <property type="interactions" value="2"/>
</dbReference>
<dbReference type="STRING" id="4932.YDL218W"/>
<dbReference type="GlyGen" id="Q07629">
    <property type="glycosylation" value="2 sites"/>
</dbReference>
<dbReference type="iPTMnet" id="Q07629"/>
<dbReference type="PaxDb" id="4932-YDL218W"/>
<dbReference type="PeptideAtlas" id="Q07629"/>
<dbReference type="EnsemblFungi" id="YDL218W_mRNA">
    <property type="protein sequence ID" value="YDL218W"/>
    <property type="gene ID" value="YDL218W"/>
</dbReference>
<dbReference type="GeneID" id="851308"/>
<dbReference type="KEGG" id="sce:YDL218W"/>
<dbReference type="AGR" id="SGD:S000002377"/>
<dbReference type="SGD" id="S000002377">
    <property type="gene designation" value="YDL218W"/>
</dbReference>
<dbReference type="VEuPathDB" id="FungiDB:YDL218W"/>
<dbReference type="eggNOG" id="ENOG502RZI4">
    <property type="taxonomic scope" value="Eukaryota"/>
</dbReference>
<dbReference type="HOGENOM" id="CLU_061420_1_1_1"/>
<dbReference type="InParanoid" id="Q07629"/>
<dbReference type="OMA" id="HRACNTS"/>
<dbReference type="OrthoDB" id="4065952at2759"/>
<dbReference type="BioCyc" id="YEAST:G3O-29599-MONOMER"/>
<dbReference type="BioGRID-ORCS" id="851308">
    <property type="hits" value="1 hit in 10 CRISPR screens"/>
</dbReference>
<dbReference type="PRO" id="PR:Q07629"/>
<dbReference type="Proteomes" id="UP000002311">
    <property type="component" value="Chromosome IV"/>
</dbReference>
<dbReference type="RNAct" id="Q07629">
    <property type="molecule type" value="protein"/>
</dbReference>
<dbReference type="GO" id="GO:0005737">
    <property type="term" value="C:cytoplasm"/>
    <property type="evidence" value="ECO:0007005"/>
    <property type="project" value="SGD"/>
</dbReference>
<dbReference type="GO" id="GO:0016020">
    <property type="term" value="C:membrane"/>
    <property type="evidence" value="ECO:0007669"/>
    <property type="project" value="UniProtKB-SubCell"/>
</dbReference>
<dbReference type="InterPro" id="IPR008253">
    <property type="entry name" value="Marvel"/>
</dbReference>
<dbReference type="PANTHER" id="PTHR37451">
    <property type="entry name" value="MARVEL DOMAIN"/>
    <property type="match status" value="1"/>
</dbReference>
<dbReference type="PANTHER" id="PTHR37451:SF1">
    <property type="entry name" value="MARVEL DOMAIN-CONTAINING PROTEIN"/>
    <property type="match status" value="1"/>
</dbReference>
<dbReference type="Pfam" id="PF01284">
    <property type="entry name" value="MARVEL"/>
    <property type="match status" value="1"/>
</dbReference>
<keyword id="KW-0325">Glycoprotein</keyword>
<keyword id="KW-0472">Membrane</keyword>
<keyword id="KW-1185">Reference proteome</keyword>
<keyword id="KW-0812">Transmembrane</keyword>
<keyword id="KW-1133">Transmembrane helix</keyword>
<comment type="subcellular location">
    <subcellularLocation>
        <location>Membrane</location>
        <topology>Multi-pass membrane protein</topology>
    </subcellularLocation>
</comment>
<comment type="induction">
    <text evidence="3">Induced under aerobic conditions.</text>
</comment>
<organism>
    <name type="scientific">Saccharomyces cerevisiae (strain ATCC 204508 / S288c)</name>
    <name type="common">Baker's yeast</name>
    <dbReference type="NCBI Taxonomy" id="559292"/>
    <lineage>
        <taxon>Eukaryota</taxon>
        <taxon>Fungi</taxon>
        <taxon>Dikarya</taxon>
        <taxon>Ascomycota</taxon>
        <taxon>Saccharomycotina</taxon>
        <taxon>Saccharomycetes</taxon>
        <taxon>Saccharomycetales</taxon>
        <taxon>Saccharomycetaceae</taxon>
        <taxon>Saccharomyces</taxon>
    </lineage>
</organism>